<proteinExistence type="inferred from homology"/>
<gene>
    <name evidence="1" type="primary">rpmF</name>
    <name type="ordered locus">TERTU_1716</name>
</gene>
<reference key="1">
    <citation type="journal article" date="2009" name="PLoS ONE">
        <title>The complete genome of Teredinibacter turnerae T7901: an intracellular endosymbiont of marine wood-boring bivalves (shipworms).</title>
        <authorList>
            <person name="Yang J.C."/>
            <person name="Madupu R."/>
            <person name="Durkin A.S."/>
            <person name="Ekborg N.A."/>
            <person name="Pedamallu C.S."/>
            <person name="Hostetler J.B."/>
            <person name="Radune D."/>
            <person name="Toms B.S."/>
            <person name="Henrissat B."/>
            <person name="Coutinho P.M."/>
            <person name="Schwarz S."/>
            <person name="Field L."/>
            <person name="Trindade-Silva A.E."/>
            <person name="Soares C.A.G."/>
            <person name="Elshahawi S."/>
            <person name="Hanora A."/>
            <person name="Schmidt E.W."/>
            <person name="Haygood M.G."/>
            <person name="Posfai J."/>
            <person name="Benner J."/>
            <person name="Madinger C."/>
            <person name="Nove J."/>
            <person name="Anton B."/>
            <person name="Chaudhary K."/>
            <person name="Foster J."/>
            <person name="Holman A."/>
            <person name="Kumar S."/>
            <person name="Lessard P.A."/>
            <person name="Luyten Y.A."/>
            <person name="Slatko B."/>
            <person name="Wood N."/>
            <person name="Wu B."/>
            <person name="Teplitski M."/>
            <person name="Mougous J.D."/>
            <person name="Ward N."/>
            <person name="Eisen J.A."/>
            <person name="Badger J.H."/>
            <person name="Distel D.L."/>
        </authorList>
    </citation>
    <scope>NUCLEOTIDE SEQUENCE [LARGE SCALE GENOMIC DNA]</scope>
    <source>
        <strain>ATCC 39867 / T7901</strain>
    </source>
</reference>
<protein>
    <recommendedName>
        <fullName evidence="1">Large ribosomal subunit protein bL32</fullName>
    </recommendedName>
    <alternativeName>
        <fullName evidence="3">50S ribosomal protein L32</fullName>
    </alternativeName>
</protein>
<name>RL32_TERTT</name>
<dbReference type="EMBL" id="CP001614">
    <property type="protein sequence ID" value="ACR13589.1"/>
    <property type="molecule type" value="Genomic_DNA"/>
</dbReference>
<dbReference type="RefSeq" id="WP_015819703.1">
    <property type="nucleotide sequence ID" value="NC_012997.1"/>
</dbReference>
<dbReference type="SMR" id="C5BU55"/>
<dbReference type="STRING" id="377629.TERTU_1716"/>
<dbReference type="GeneID" id="58409417"/>
<dbReference type="GeneID" id="93857018"/>
<dbReference type="KEGG" id="ttu:TERTU_1716"/>
<dbReference type="eggNOG" id="COG0333">
    <property type="taxonomic scope" value="Bacteria"/>
</dbReference>
<dbReference type="HOGENOM" id="CLU_129084_2_1_6"/>
<dbReference type="OrthoDB" id="9801927at2"/>
<dbReference type="Proteomes" id="UP000009080">
    <property type="component" value="Chromosome"/>
</dbReference>
<dbReference type="GO" id="GO:0015934">
    <property type="term" value="C:large ribosomal subunit"/>
    <property type="evidence" value="ECO:0007669"/>
    <property type="project" value="InterPro"/>
</dbReference>
<dbReference type="GO" id="GO:0003735">
    <property type="term" value="F:structural constituent of ribosome"/>
    <property type="evidence" value="ECO:0007669"/>
    <property type="project" value="InterPro"/>
</dbReference>
<dbReference type="GO" id="GO:0006412">
    <property type="term" value="P:translation"/>
    <property type="evidence" value="ECO:0007669"/>
    <property type="project" value="UniProtKB-UniRule"/>
</dbReference>
<dbReference type="HAMAP" id="MF_00340">
    <property type="entry name" value="Ribosomal_bL32"/>
    <property type="match status" value="1"/>
</dbReference>
<dbReference type="InterPro" id="IPR002677">
    <property type="entry name" value="Ribosomal_bL32"/>
</dbReference>
<dbReference type="InterPro" id="IPR044957">
    <property type="entry name" value="Ribosomal_bL32_bact"/>
</dbReference>
<dbReference type="InterPro" id="IPR011332">
    <property type="entry name" value="Ribosomal_zn-bd"/>
</dbReference>
<dbReference type="NCBIfam" id="TIGR01031">
    <property type="entry name" value="rpmF_bact"/>
    <property type="match status" value="1"/>
</dbReference>
<dbReference type="PANTHER" id="PTHR35534">
    <property type="entry name" value="50S RIBOSOMAL PROTEIN L32"/>
    <property type="match status" value="1"/>
</dbReference>
<dbReference type="PANTHER" id="PTHR35534:SF1">
    <property type="entry name" value="LARGE RIBOSOMAL SUBUNIT PROTEIN BL32"/>
    <property type="match status" value="1"/>
</dbReference>
<dbReference type="Pfam" id="PF01783">
    <property type="entry name" value="Ribosomal_L32p"/>
    <property type="match status" value="1"/>
</dbReference>
<dbReference type="SUPFAM" id="SSF57829">
    <property type="entry name" value="Zn-binding ribosomal proteins"/>
    <property type="match status" value="1"/>
</dbReference>
<feature type="chain" id="PRO_1000205273" description="Large ribosomal subunit protein bL32">
    <location>
        <begin position="1"/>
        <end position="60"/>
    </location>
</feature>
<feature type="region of interest" description="Disordered" evidence="2">
    <location>
        <begin position="1"/>
        <end position="47"/>
    </location>
</feature>
<feature type="compositionally biased region" description="Basic residues" evidence="2">
    <location>
        <begin position="7"/>
        <end position="16"/>
    </location>
</feature>
<keyword id="KW-1185">Reference proteome</keyword>
<keyword id="KW-0687">Ribonucleoprotein</keyword>
<keyword id="KW-0689">Ribosomal protein</keyword>
<organism>
    <name type="scientific">Teredinibacter turnerae (strain ATCC 39867 / T7901)</name>
    <dbReference type="NCBI Taxonomy" id="377629"/>
    <lineage>
        <taxon>Bacteria</taxon>
        <taxon>Pseudomonadati</taxon>
        <taxon>Pseudomonadota</taxon>
        <taxon>Gammaproteobacteria</taxon>
        <taxon>Cellvibrionales</taxon>
        <taxon>Cellvibrionaceae</taxon>
        <taxon>Teredinibacter</taxon>
    </lineage>
</organism>
<accession>C5BU55</accession>
<comment type="similarity">
    <text evidence="1">Belongs to the bacterial ribosomal protein bL32 family.</text>
</comment>
<sequence>MAVQQNRKTRSKRGMRRSHDALTSSTLSTDPTTGEKHRRHHVTADGFYRGRKVVEVGDDE</sequence>
<evidence type="ECO:0000255" key="1">
    <source>
        <dbReference type="HAMAP-Rule" id="MF_00340"/>
    </source>
</evidence>
<evidence type="ECO:0000256" key="2">
    <source>
        <dbReference type="SAM" id="MobiDB-lite"/>
    </source>
</evidence>
<evidence type="ECO:0000305" key="3"/>